<keyword id="KW-0963">Cytoplasm</keyword>
<keyword id="KW-0448">Lipopolysaccharide biosynthesis</keyword>
<keyword id="KW-0548">Nucleotidyltransferase</keyword>
<keyword id="KW-1185">Reference proteome</keyword>
<keyword id="KW-0808">Transferase</keyword>
<reference key="1">
    <citation type="journal article" date="2003" name="Proc. Natl. Acad. Sci. U.S.A.">
        <title>The complete genome sequence of the Arabidopsis and tomato pathogen Pseudomonas syringae pv. tomato DC3000.</title>
        <authorList>
            <person name="Buell C.R."/>
            <person name="Joardar V."/>
            <person name="Lindeberg M."/>
            <person name="Selengut J."/>
            <person name="Paulsen I.T."/>
            <person name="Gwinn M.L."/>
            <person name="Dodson R.J."/>
            <person name="DeBoy R.T."/>
            <person name="Durkin A.S."/>
            <person name="Kolonay J.F."/>
            <person name="Madupu R."/>
            <person name="Daugherty S.C."/>
            <person name="Brinkac L.M."/>
            <person name="Beanan M.J."/>
            <person name="Haft D.H."/>
            <person name="Nelson W.C."/>
            <person name="Davidsen T.M."/>
            <person name="Zafar N."/>
            <person name="Zhou L."/>
            <person name="Liu J."/>
            <person name="Yuan Q."/>
            <person name="Khouri H.M."/>
            <person name="Fedorova N.B."/>
            <person name="Tran B."/>
            <person name="Russell D."/>
            <person name="Berry K.J."/>
            <person name="Utterback T.R."/>
            <person name="Van Aken S.E."/>
            <person name="Feldblyum T.V."/>
            <person name="D'Ascenzo M."/>
            <person name="Deng W.-L."/>
            <person name="Ramos A.R."/>
            <person name="Alfano J.R."/>
            <person name="Cartinhour S."/>
            <person name="Chatterjee A.K."/>
            <person name="Delaney T.P."/>
            <person name="Lazarowitz S.G."/>
            <person name="Martin G.B."/>
            <person name="Schneider D.J."/>
            <person name="Tang X."/>
            <person name="Bender C.L."/>
            <person name="White O."/>
            <person name="Fraser C.M."/>
            <person name="Collmer A."/>
        </authorList>
    </citation>
    <scope>NUCLEOTIDE SEQUENCE [LARGE SCALE GENOMIC DNA]</scope>
    <source>
        <strain>ATCC BAA-871 / DC3000</strain>
    </source>
</reference>
<comment type="function">
    <text evidence="1">Activates KDO (a required 8-carbon sugar) for incorporation into bacterial lipopolysaccharide in Gram-negative bacteria.</text>
</comment>
<comment type="catalytic activity">
    <reaction evidence="1">
        <text>3-deoxy-alpha-D-manno-oct-2-ulosonate + CTP = CMP-3-deoxy-beta-D-manno-octulosonate + diphosphate</text>
        <dbReference type="Rhea" id="RHEA:23448"/>
        <dbReference type="ChEBI" id="CHEBI:33019"/>
        <dbReference type="ChEBI" id="CHEBI:37563"/>
        <dbReference type="ChEBI" id="CHEBI:85986"/>
        <dbReference type="ChEBI" id="CHEBI:85987"/>
        <dbReference type="EC" id="2.7.7.38"/>
    </reaction>
</comment>
<comment type="pathway">
    <text evidence="1">Nucleotide-sugar biosynthesis; CMP-3-deoxy-D-manno-octulosonate biosynthesis; CMP-3-deoxy-D-manno-octulosonate from 3-deoxy-D-manno-octulosonate and CTP: step 1/1.</text>
</comment>
<comment type="pathway">
    <text evidence="1">Bacterial outer membrane biogenesis; lipopolysaccharide biosynthesis.</text>
</comment>
<comment type="subcellular location">
    <subcellularLocation>
        <location evidence="1">Cytoplasm</location>
    </subcellularLocation>
</comment>
<comment type="similarity">
    <text evidence="1">Belongs to the KdsB family.</text>
</comment>
<gene>
    <name evidence="1" type="primary">kdsB</name>
    <name type="ordered locus">PSPTO_3843</name>
</gene>
<name>KDSB_PSESM</name>
<feature type="chain" id="PRO_0000188512" description="3-deoxy-manno-octulosonate cytidylyltransferase">
    <location>
        <begin position="1"/>
        <end position="254"/>
    </location>
</feature>
<accession>Q87YF7</accession>
<protein>
    <recommendedName>
        <fullName evidence="1">3-deoxy-manno-octulosonate cytidylyltransferase</fullName>
        <ecNumber evidence="1">2.7.7.38</ecNumber>
    </recommendedName>
    <alternativeName>
        <fullName evidence="1">CMP-2-keto-3-deoxyoctulosonic acid synthase</fullName>
        <shortName evidence="1">CKS</shortName>
        <shortName evidence="1">CMP-KDO synthase</shortName>
    </alternativeName>
</protein>
<sequence length="254" mass="27569">MTAAFTVVIPARYGSSRFPGKPLKTIAGKPMVQLVWEQARKSSAERVVIATDDARIVEACRAFGAEVLLTRDDHNSGTDRLAEVATQLGLAANAIVVNVQGDEPLIPPAVIDQVAANLAKHPEAGMATLAEPIDDVAALFNPNIVKVSTDINGLALTFSRAPLPWARDALARSKDELPADVPYRRHIGIYAYRAGFLHDFVSWGPCWLENTESLEQLRALWNGVRIHVADALEAPPGGVDTPEDLERVRRLLEA</sequence>
<organism>
    <name type="scientific">Pseudomonas syringae pv. tomato (strain ATCC BAA-871 / DC3000)</name>
    <dbReference type="NCBI Taxonomy" id="223283"/>
    <lineage>
        <taxon>Bacteria</taxon>
        <taxon>Pseudomonadati</taxon>
        <taxon>Pseudomonadota</taxon>
        <taxon>Gammaproteobacteria</taxon>
        <taxon>Pseudomonadales</taxon>
        <taxon>Pseudomonadaceae</taxon>
        <taxon>Pseudomonas</taxon>
    </lineage>
</organism>
<dbReference type="EC" id="2.7.7.38" evidence="1"/>
<dbReference type="EMBL" id="AE016853">
    <property type="protein sequence ID" value="AAO57310.1"/>
    <property type="molecule type" value="Genomic_DNA"/>
</dbReference>
<dbReference type="RefSeq" id="NP_793615.1">
    <property type="nucleotide sequence ID" value="NC_004578.1"/>
</dbReference>
<dbReference type="RefSeq" id="WP_005770642.1">
    <property type="nucleotide sequence ID" value="NC_004578.1"/>
</dbReference>
<dbReference type="SMR" id="Q87YF7"/>
<dbReference type="STRING" id="223283.PSPTO_3843"/>
<dbReference type="GeneID" id="1185514"/>
<dbReference type="KEGG" id="pst:PSPTO_3843"/>
<dbReference type="PATRIC" id="fig|223283.9.peg.3940"/>
<dbReference type="eggNOG" id="COG1212">
    <property type="taxonomic scope" value="Bacteria"/>
</dbReference>
<dbReference type="HOGENOM" id="CLU_065038_1_0_6"/>
<dbReference type="OrthoDB" id="9815559at2"/>
<dbReference type="PhylomeDB" id="Q87YF7"/>
<dbReference type="UniPathway" id="UPA00030"/>
<dbReference type="UniPathway" id="UPA00358">
    <property type="reaction ID" value="UER00476"/>
</dbReference>
<dbReference type="Proteomes" id="UP000002515">
    <property type="component" value="Chromosome"/>
</dbReference>
<dbReference type="GO" id="GO:0005829">
    <property type="term" value="C:cytosol"/>
    <property type="evidence" value="ECO:0007669"/>
    <property type="project" value="TreeGrafter"/>
</dbReference>
<dbReference type="GO" id="GO:0008690">
    <property type="term" value="F:3-deoxy-manno-octulosonate cytidylyltransferase activity"/>
    <property type="evidence" value="ECO:0007669"/>
    <property type="project" value="UniProtKB-UniRule"/>
</dbReference>
<dbReference type="GO" id="GO:0033468">
    <property type="term" value="P:CMP-keto-3-deoxy-D-manno-octulosonic acid biosynthetic process"/>
    <property type="evidence" value="ECO:0007669"/>
    <property type="project" value="UniProtKB-UniRule"/>
</dbReference>
<dbReference type="GO" id="GO:0009103">
    <property type="term" value="P:lipopolysaccharide biosynthetic process"/>
    <property type="evidence" value="ECO:0007669"/>
    <property type="project" value="UniProtKB-UniRule"/>
</dbReference>
<dbReference type="CDD" id="cd02517">
    <property type="entry name" value="CMP-KDO-Synthetase"/>
    <property type="match status" value="1"/>
</dbReference>
<dbReference type="FunFam" id="3.90.550.10:FF:000011">
    <property type="entry name" value="3-deoxy-manno-octulosonate cytidylyltransferase"/>
    <property type="match status" value="1"/>
</dbReference>
<dbReference type="Gene3D" id="3.90.550.10">
    <property type="entry name" value="Spore Coat Polysaccharide Biosynthesis Protein SpsA, Chain A"/>
    <property type="match status" value="1"/>
</dbReference>
<dbReference type="HAMAP" id="MF_00057">
    <property type="entry name" value="KdsB"/>
    <property type="match status" value="1"/>
</dbReference>
<dbReference type="InterPro" id="IPR003329">
    <property type="entry name" value="Cytidylyl_trans"/>
</dbReference>
<dbReference type="InterPro" id="IPR004528">
    <property type="entry name" value="KdsB"/>
</dbReference>
<dbReference type="InterPro" id="IPR029044">
    <property type="entry name" value="Nucleotide-diphossugar_trans"/>
</dbReference>
<dbReference type="NCBIfam" id="TIGR00466">
    <property type="entry name" value="kdsB"/>
    <property type="match status" value="1"/>
</dbReference>
<dbReference type="NCBIfam" id="NF003950">
    <property type="entry name" value="PRK05450.1-3"/>
    <property type="match status" value="1"/>
</dbReference>
<dbReference type="NCBIfam" id="NF003952">
    <property type="entry name" value="PRK05450.1-5"/>
    <property type="match status" value="1"/>
</dbReference>
<dbReference type="NCBIfam" id="NF009905">
    <property type="entry name" value="PRK13368.1"/>
    <property type="match status" value="1"/>
</dbReference>
<dbReference type="PANTHER" id="PTHR42866">
    <property type="entry name" value="3-DEOXY-MANNO-OCTULOSONATE CYTIDYLYLTRANSFERASE"/>
    <property type="match status" value="1"/>
</dbReference>
<dbReference type="PANTHER" id="PTHR42866:SF2">
    <property type="entry name" value="3-DEOXY-MANNO-OCTULOSONATE CYTIDYLYLTRANSFERASE, MITOCHONDRIAL"/>
    <property type="match status" value="1"/>
</dbReference>
<dbReference type="Pfam" id="PF02348">
    <property type="entry name" value="CTP_transf_3"/>
    <property type="match status" value="1"/>
</dbReference>
<dbReference type="SUPFAM" id="SSF53448">
    <property type="entry name" value="Nucleotide-diphospho-sugar transferases"/>
    <property type="match status" value="1"/>
</dbReference>
<proteinExistence type="inferred from homology"/>
<evidence type="ECO:0000255" key="1">
    <source>
        <dbReference type="HAMAP-Rule" id="MF_00057"/>
    </source>
</evidence>